<name>PYY_ORENI</name>
<sequence>YPPKPESPGSDASPEDWAKYHAAVRHYVNLITRQRY</sequence>
<proteinExistence type="evidence at protein level"/>
<accession>P81028</accession>
<dbReference type="SMR" id="P81028"/>
<dbReference type="STRING" id="8128.ENSONIP00000025077"/>
<dbReference type="eggNOG" id="ENOG502SS05">
    <property type="taxonomic scope" value="Eukaryota"/>
</dbReference>
<dbReference type="HOGENOM" id="CLU_162379_1_0_1"/>
<dbReference type="InParanoid" id="P81028"/>
<dbReference type="Proteomes" id="UP000005207">
    <property type="component" value="Unplaced"/>
</dbReference>
<dbReference type="GO" id="GO:0005615">
    <property type="term" value="C:extracellular space"/>
    <property type="evidence" value="ECO:0007669"/>
    <property type="project" value="TreeGrafter"/>
</dbReference>
<dbReference type="GO" id="GO:0005184">
    <property type="term" value="F:neuropeptide hormone activity"/>
    <property type="evidence" value="ECO:0007669"/>
    <property type="project" value="TreeGrafter"/>
</dbReference>
<dbReference type="GO" id="GO:0031841">
    <property type="term" value="F:neuropeptide Y receptor binding"/>
    <property type="evidence" value="ECO:0007669"/>
    <property type="project" value="TreeGrafter"/>
</dbReference>
<dbReference type="GO" id="GO:0007631">
    <property type="term" value="P:feeding behavior"/>
    <property type="evidence" value="ECO:0007669"/>
    <property type="project" value="TreeGrafter"/>
</dbReference>
<dbReference type="GO" id="GO:0007218">
    <property type="term" value="P:neuropeptide signaling pathway"/>
    <property type="evidence" value="ECO:0007669"/>
    <property type="project" value="TreeGrafter"/>
</dbReference>
<dbReference type="CDD" id="cd00126">
    <property type="entry name" value="PAH"/>
    <property type="match status" value="1"/>
</dbReference>
<dbReference type="Gene3D" id="6.10.250.900">
    <property type="match status" value="1"/>
</dbReference>
<dbReference type="InterPro" id="IPR001955">
    <property type="entry name" value="Pancreatic_hormone-like"/>
</dbReference>
<dbReference type="InterPro" id="IPR020392">
    <property type="entry name" value="Pancreatic_hormone-like_CS"/>
</dbReference>
<dbReference type="PANTHER" id="PTHR10533">
    <property type="entry name" value="NEUROPEPTIDE Y/PANCREATIC HORMONE/PEPTIDE YY"/>
    <property type="match status" value="1"/>
</dbReference>
<dbReference type="PANTHER" id="PTHR10533:SF14">
    <property type="entry name" value="PEPTIDE YY-RELATED"/>
    <property type="match status" value="1"/>
</dbReference>
<dbReference type="Pfam" id="PF00159">
    <property type="entry name" value="Hormone_3"/>
    <property type="match status" value="1"/>
</dbReference>
<dbReference type="PRINTS" id="PR00278">
    <property type="entry name" value="PANCHORMONE"/>
</dbReference>
<dbReference type="SMART" id="SM00309">
    <property type="entry name" value="PAH"/>
    <property type="match status" value="1"/>
</dbReference>
<dbReference type="PROSITE" id="PS00265">
    <property type="entry name" value="PANCREATIC_HORMONE_1"/>
    <property type="match status" value="1"/>
</dbReference>
<dbReference type="PROSITE" id="PS50276">
    <property type="entry name" value="PANCREATIC_HORMONE_2"/>
    <property type="match status" value="1"/>
</dbReference>
<evidence type="ECO:0000250" key="1"/>
<evidence type="ECO:0000305" key="2"/>
<reference key="1">
    <citation type="journal article" date="1995" name="Comp. Biochem. Physiol.">
        <title>Characterization of the pancreatic hormones from the Brockmann body of the tilapia: implications for islet xenograft studies.</title>
        <authorList>
            <person name="Nguyen T.M."/>
            <person name="Wright J.R. Jr."/>
            <person name="Nielsen P.F."/>
            <person name="Conlon J.M."/>
        </authorList>
    </citation>
    <scope>PROTEIN SEQUENCE</scope>
</reference>
<keyword id="KW-0027">Amidation</keyword>
<keyword id="KW-0903">Direct protein sequencing</keyword>
<keyword id="KW-0372">Hormone</keyword>
<keyword id="KW-1185">Reference proteome</keyword>
<keyword id="KW-0964">Secreted</keyword>
<protein>
    <recommendedName>
        <fullName>Peptide YY-like</fullName>
        <shortName>PYY</shortName>
    </recommendedName>
</protein>
<feature type="peptide" id="PRO_0000044817" description="Peptide YY-like">
    <location>
        <begin position="1"/>
        <end position="36"/>
    </location>
</feature>
<feature type="modified residue" description="Tyrosine amide" evidence="1">
    <location>
        <position position="36"/>
    </location>
</feature>
<comment type="subcellular location">
    <subcellularLocation>
        <location>Secreted</location>
    </subcellularLocation>
</comment>
<comment type="similarity">
    <text evidence="2">Belongs to the NPY family.</text>
</comment>
<organism>
    <name type="scientific">Oreochromis niloticus</name>
    <name type="common">Nile tilapia</name>
    <name type="synonym">Tilapia nilotica</name>
    <dbReference type="NCBI Taxonomy" id="8128"/>
    <lineage>
        <taxon>Eukaryota</taxon>
        <taxon>Metazoa</taxon>
        <taxon>Chordata</taxon>
        <taxon>Craniata</taxon>
        <taxon>Vertebrata</taxon>
        <taxon>Euteleostomi</taxon>
        <taxon>Actinopterygii</taxon>
        <taxon>Neopterygii</taxon>
        <taxon>Teleostei</taxon>
        <taxon>Neoteleostei</taxon>
        <taxon>Acanthomorphata</taxon>
        <taxon>Ovalentaria</taxon>
        <taxon>Cichlomorphae</taxon>
        <taxon>Cichliformes</taxon>
        <taxon>Cichlidae</taxon>
        <taxon>African cichlids</taxon>
        <taxon>Pseudocrenilabrinae</taxon>
        <taxon>Oreochromini</taxon>
        <taxon>Oreochromis</taxon>
    </lineage>
</organism>